<accession>A3PBK8</accession>
<gene>
    <name evidence="1" type="primary">hemL</name>
    <name type="ordered locus">P9301_05101</name>
</gene>
<proteinExistence type="inferred from homology"/>
<evidence type="ECO:0000255" key="1">
    <source>
        <dbReference type="HAMAP-Rule" id="MF_00375"/>
    </source>
</evidence>
<sequence>MTDILNYTKSEEIFSAAQELMPGGVSSPVRAFKSVGGQPIVFDRVKGPFAWDIDGNRYIDYIGSWGPAICGHAHPEVITALHEAIEKGTSFGAPCVLENKLAEMVIDAVPSVEMVRFVNSGTEACMAVLRLMRAFTGRDKVIKFDGCYHGHADMFLVKAGSGVATLGLPDSPGVPRTTTANTLTAPYNDLEAVKKLFSENPDAISGVILEPIVGNAGFITPEPGFLEGLRELTTENGSLLVFDEVMTGFRISYGGAQEKFGVTPDLTTLGKVIGGGLPVGAYGGKKEIMSMVAPAGPVYQAGTLSGNPLAMTAGIKTLELLKQEGTYDKLDSLTSRLIEGIIQSAENNGIAINGGSVSAMFGFFLCDGPVRNFNEAKTNDAELFGKLHREMLRRGIYLAPSPFEAGFTSLAHSEEEIDKTIEAFDESFNEIKK</sequence>
<feature type="chain" id="PRO_0000300933" description="Glutamate-1-semialdehyde 2,1-aminomutase">
    <location>
        <begin position="1"/>
        <end position="433"/>
    </location>
</feature>
<feature type="modified residue" description="N6-(pyridoxal phosphate)lysine" evidence="1">
    <location>
        <position position="271"/>
    </location>
</feature>
<name>GSA_PROM0</name>
<dbReference type="EC" id="5.4.3.8" evidence="1"/>
<dbReference type="EMBL" id="CP000576">
    <property type="protein sequence ID" value="ABO17133.1"/>
    <property type="molecule type" value="Genomic_DNA"/>
</dbReference>
<dbReference type="RefSeq" id="WP_011862504.1">
    <property type="nucleotide sequence ID" value="NC_009091.1"/>
</dbReference>
<dbReference type="SMR" id="A3PBK8"/>
<dbReference type="STRING" id="167546.P9301_05101"/>
<dbReference type="KEGG" id="pmg:P9301_05101"/>
<dbReference type="eggNOG" id="COG0001">
    <property type="taxonomic scope" value="Bacteria"/>
</dbReference>
<dbReference type="HOGENOM" id="CLU_016922_1_5_3"/>
<dbReference type="OrthoDB" id="9807885at2"/>
<dbReference type="UniPathway" id="UPA00251">
    <property type="reaction ID" value="UER00317"/>
</dbReference>
<dbReference type="UniPathway" id="UPA00668"/>
<dbReference type="Proteomes" id="UP000001430">
    <property type="component" value="Chromosome"/>
</dbReference>
<dbReference type="GO" id="GO:0005737">
    <property type="term" value="C:cytoplasm"/>
    <property type="evidence" value="ECO:0007669"/>
    <property type="project" value="UniProtKB-SubCell"/>
</dbReference>
<dbReference type="GO" id="GO:0042286">
    <property type="term" value="F:glutamate-1-semialdehyde 2,1-aminomutase activity"/>
    <property type="evidence" value="ECO:0007669"/>
    <property type="project" value="UniProtKB-UniRule"/>
</dbReference>
<dbReference type="GO" id="GO:0030170">
    <property type="term" value="F:pyridoxal phosphate binding"/>
    <property type="evidence" value="ECO:0007669"/>
    <property type="project" value="InterPro"/>
</dbReference>
<dbReference type="GO" id="GO:0008483">
    <property type="term" value="F:transaminase activity"/>
    <property type="evidence" value="ECO:0007669"/>
    <property type="project" value="InterPro"/>
</dbReference>
<dbReference type="GO" id="GO:0015995">
    <property type="term" value="P:chlorophyll biosynthetic process"/>
    <property type="evidence" value="ECO:0007669"/>
    <property type="project" value="UniProtKB-UniRule"/>
</dbReference>
<dbReference type="GO" id="GO:0006782">
    <property type="term" value="P:protoporphyrinogen IX biosynthetic process"/>
    <property type="evidence" value="ECO:0007669"/>
    <property type="project" value="UniProtKB-UniRule"/>
</dbReference>
<dbReference type="CDD" id="cd00610">
    <property type="entry name" value="OAT_like"/>
    <property type="match status" value="1"/>
</dbReference>
<dbReference type="FunFam" id="3.40.640.10:FF:000021">
    <property type="entry name" value="Glutamate-1-semialdehyde 2,1-aminomutase"/>
    <property type="match status" value="1"/>
</dbReference>
<dbReference type="Gene3D" id="3.90.1150.10">
    <property type="entry name" value="Aspartate Aminotransferase, domain 1"/>
    <property type="match status" value="1"/>
</dbReference>
<dbReference type="Gene3D" id="3.40.640.10">
    <property type="entry name" value="Type I PLP-dependent aspartate aminotransferase-like (Major domain)"/>
    <property type="match status" value="1"/>
</dbReference>
<dbReference type="HAMAP" id="MF_00375">
    <property type="entry name" value="HemL_aminotrans_3"/>
    <property type="match status" value="1"/>
</dbReference>
<dbReference type="InterPro" id="IPR004639">
    <property type="entry name" value="4pyrrol_synth_GluAld_NH2Trfase"/>
</dbReference>
<dbReference type="InterPro" id="IPR005814">
    <property type="entry name" value="Aminotrans_3"/>
</dbReference>
<dbReference type="InterPro" id="IPR049704">
    <property type="entry name" value="Aminotrans_3_PPA_site"/>
</dbReference>
<dbReference type="InterPro" id="IPR015424">
    <property type="entry name" value="PyrdxlP-dep_Trfase"/>
</dbReference>
<dbReference type="InterPro" id="IPR015421">
    <property type="entry name" value="PyrdxlP-dep_Trfase_major"/>
</dbReference>
<dbReference type="InterPro" id="IPR015422">
    <property type="entry name" value="PyrdxlP-dep_Trfase_small"/>
</dbReference>
<dbReference type="NCBIfam" id="TIGR00713">
    <property type="entry name" value="hemL"/>
    <property type="match status" value="1"/>
</dbReference>
<dbReference type="NCBIfam" id="NF000818">
    <property type="entry name" value="PRK00062.1"/>
    <property type="match status" value="1"/>
</dbReference>
<dbReference type="PANTHER" id="PTHR43713">
    <property type="entry name" value="GLUTAMATE-1-SEMIALDEHYDE 2,1-AMINOMUTASE"/>
    <property type="match status" value="1"/>
</dbReference>
<dbReference type="PANTHER" id="PTHR43713:SF3">
    <property type="entry name" value="GLUTAMATE-1-SEMIALDEHYDE 2,1-AMINOMUTASE 1, CHLOROPLASTIC-RELATED"/>
    <property type="match status" value="1"/>
</dbReference>
<dbReference type="Pfam" id="PF00202">
    <property type="entry name" value="Aminotran_3"/>
    <property type="match status" value="1"/>
</dbReference>
<dbReference type="SUPFAM" id="SSF53383">
    <property type="entry name" value="PLP-dependent transferases"/>
    <property type="match status" value="1"/>
</dbReference>
<dbReference type="PROSITE" id="PS00600">
    <property type="entry name" value="AA_TRANSFER_CLASS_3"/>
    <property type="match status" value="1"/>
</dbReference>
<protein>
    <recommendedName>
        <fullName evidence="1">Glutamate-1-semialdehyde 2,1-aminomutase</fullName>
        <shortName evidence="1">GSA</shortName>
        <ecNumber evidence="1">5.4.3.8</ecNumber>
    </recommendedName>
    <alternativeName>
        <fullName evidence="1">Glutamate-1-semialdehyde aminotransferase</fullName>
        <shortName evidence="1">GSA-AT</shortName>
    </alternativeName>
</protein>
<organism>
    <name type="scientific">Prochlorococcus marinus (strain MIT 9301)</name>
    <dbReference type="NCBI Taxonomy" id="167546"/>
    <lineage>
        <taxon>Bacteria</taxon>
        <taxon>Bacillati</taxon>
        <taxon>Cyanobacteriota</taxon>
        <taxon>Cyanophyceae</taxon>
        <taxon>Synechococcales</taxon>
        <taxon>Prochlorococcaceae</taxon>
        <taxon>Prochlorococcus</taxon>
    </lineage>
</organism>
<comment type="catalytic activity">
    <reaction evidence="1">
        <text>(S)-4-amino-5-oxopentanoate = 5-aminolevulinate</text>
        <dbReference type="Rhea" id="RHEA:14265"/>
        <dbReference type="ChEBI" id="CHEBI:57501"/>
        <dbReference type="ChEBI" id="CHEBI:356416"/>
        <dbReference type="EC" id="5.4.3.8"/>
    </reaction>
</comment>
<comment type="cofactor">
    <cofactor evidence="1">
        <name>pyridoxal 5'-phosphate</name>
        <dbReference type="ChEBI" id="CHEBI:597326"/>
    </cofactor>
</comment>
<comment type="pathway">
    <text evidence="1">Porphyrin-containing compound metabolism; protoporphyrin-IX biosynthesis; 5-aminolevulinate from L-glutamyl-tRNA(Glu): step 2/2.</text>
</comment>
<comment type="pathway">
    <text evidence="1">Porphyrin-containing compound metabolism; chlorophyll biosynthesis.</text>
</comment>
<comment type="subunit">
    <text evidence="1">Homodimer.</text>
</comment>
<comment type="subcellular location">
    <subcellularLocation>
        <location evidence="1">Cytoplasm</location>
    </subcellularLocation>
</comment>
<comment type="similarity">
    <text evidence="1">Belongs to the class-III pyridoxal-phosphate-dependent aminotransferase family. HemL subfamily.</text>
</comment>
<keyword id="KW-0149">Chlorophyll biosynthesis</keyword>
<keyword id="KW-0963">Cytoplasm</keyword>
<keyword id="KW-0413">Isomerase</keyword>
<keyword id="KW-0627">Porphyrin biosynthesis</keyword>
<keyword id="KW-0663">Pyridoxal phosphate</keyword>
<keyword id="KW-1185">Reference proteome</keyword>
<reference key="1">
    <citation type="journal article" date="2007" name="PLoS Genet.">
        <title>Patterns and implications of gene gain and loss in the evolution of Prochlorococcus.</title>
        <authorList>
            <person name="Kettler G.C."/>
            <person name="Martiny A.C."/>
            <person name="Huang K."/>
            <person name="Zucker J."/>
            <person name="Coleman M.L."/>
            <person name="Rodrigue S."/>
            <person name="Chen F."/>
            <person name="Lapidus A."/>
            <person name="Ferriera S."/>
            <person name="Johnson J."/>
            <person name="Steglich C."/>
            <person name="Church G.M."/>
            <person name="Richardson P."/>
            <person name="Chisholm S.W."/>
        </authorList>
    </citation>
    <scope>NUCLEOTIDE SEQUENCE [LARGE SCALE GENOMIC DNA]</scope>
    <source>
        <strain>MIT 9301</strain>
    </source>
</reference>